<comment type="function">
    <text evidence="3 6">Substrate-specific adapter of a DCX (DDB1-CUL4-X-box) E3 ubiquitin-protein ligase complex required for cell cycle control, DNA damage response and translesion DNA synthesis. The DCX(DTL) complex, also named CRL4(CDT2) complex, mediates the polyubiquitination and subsequent degradation of CDT1, CDKN1A/p21(CIP1), KMT5A and SDE2. CDT1 degradation in response to DNA damage is necessary to ensure proper cell cycle regulation of DNA replication. CDKN1A/p21(CIP1) degradation during S phase or following UV irradiation is essential to control replication licensing. KMT5A degradation is also important for a proper regulation of mechanisms such as TGF-beta signaling, cell cycle progression, DNA repair and cell migration. Most substrates require their interaction with PCNA for their polyubiquitination: substrates interact with PCNA via their PIP-box, and those containing the 'K+4' motif in the PIP box, recruit the DCX(DTL) complex, leading to their degradation. In undamaged proliferating cells, the DCX(DTL) complex also promotes the 'Lys-164' monoubiquitination of PCNA, thereby being involved in PCNA-dependent translesion DNA synthesis. May play a role in the regulation of the circadian clock (By similarity) (PubMed:19595719).</text>
</comment>
<comment type="pathway">
    <text>Protein modification; protein ubiquitination.</text>
</comment>
<comment type="subunit">
    <text evidence="2">Component of the DCX(DTL) E3 ubiquitin ligase complex, at least composed of cul4 (cul4a or cul4b), ddb1, dtl/cdt2 and rbx1.</text>
</comment>
<comment type="subcellular location">
    <subcellularLocation>
        <location evidence="3">Nucleus</location>
    </subcellularLocation>
    <subcellularLocation>
        <location evidence="1">Cytoplasm</location>
        <location evidence="1">Cytoskeleton</location>
        <location evidence="1">Microtubule organizing center</location>
        <location evidence="1">Centrosome</location>
    </subcellularLocation>
    <subcellularLocation>
        <location evidence="1">Chromosome</location>
    </subcellularLocation>
</comment>
<comment type="similarity">
    <text evidence="7">Belongs to the WD repeat cdt2 family.</text>
</comment>
<name>DTLA_XENLA</name>
<sequence>MLFRSVMNKPRLGYGQKGAPFTYPLQSLLQCYQCVKQDEHISYGELGMPVPPFGCAFSTVPDMSHVLAVANEEGIVRLYDTECRDMQRLLMKEFMAHTNAVFDIAWVPGEHKLVTASGDQTAKLWDVMAGELIGECRGHQCSLKSVSFSKFERAVFSTGGRDGNIMMWDTRCSKKDGFYRQVNQITGAHNAIDKQTPSKMKKRKPSIRGLAPSVDSQQSVTVVIFQDEYTIISAGAVDGVVKIWDLRKNYSAYRQDPVPVKHFPYPGNSTRKLGYSSLVLDPTGTNLFASCTDDNVYMFNATGLKTDPVSIFRGHQNSTFYIKASVSPDGQFLLSGSSDHSAYIWQVSDPMAAPVTLMGHCQEVTSVAWCQSDFTKIATCSDDNTVRVWRLKRSCEDSSESDKRDSVGWACKKKFEPSSMAANLCTPGKPSVMSSSSLTSSPTPASCAPSNTGDLPMPSSTPISALLPDPKLQTPKRINNGGLGVSPKQMSSSKMSIKDWVTRTPKSSTRTDTKTPSPRKAFTPVEQYPSVSSARVQLPYEKRAKRRLETSSEYAEHVCPDNCNCVRELEPGLKKAKLDVCFIDKERDSSDDKCLRLSDLSKGFDQELSPSPSTSLHMNATENLLQLGPLSELKSVLLDKENSSPEKNWLSALGHKFKSSPQNKASGSPSSRTSTTKKQQPRNAPNSPVSVPTPPGSMRKICTYFFKKSE</sequence>
<dbReference type="EMBL" id="BC097560">
    <property type="protein sequence ID" value="AAH97560.1"/>
    <property type="molecule type" value="mRNA"/>
</dbReference>
<dbReference type="RefSeq" id="NP_001090030.1">
    <property type="nucleotide sequence ID" value="NM_001096561.1"/>
</dbReference>
<dbReference type="SMR" id="Q4V837"/>
<dbReference type="ELM" id="Q4V837"/>
<dbReference type="DNASU" id="735103"/>
<dbReference type="AGR" id="Xenbase:XB-GENE-6254292"/>
<dbReference type="Xenbase" id="XB-GENE-6254292">
    <property type="gene designation" value="dtl.S"/>
</dbReference>
<dbReference type="UniPathway" id="UPA00143"/>
<dbReference type="Proteomes" id="UP000186698">
    <property type="component" value="Unplaced"/>
</dbReference>
<dbReference type="Bgee" id="735103">
    <property type="expression patterns" value="Expressed in blastula and 12 other cell types or tissues"/>
</dbReference>
<dbReference type="GO" id="GO:0005813">
    <property type="term" value="C:centrosome"/>
    <property type="evidence" value="ECO:0000250"/>
    <property type="project" value="UniProtKB"/>
</dbReference>
<dbReference type="GO" id="GO:0005694">
    <property type="term" value="C:chromosome"/>
    <property type="evidence" value="ECO:0007669"/>
    <property type="project" value="UniProtKB-SubCell"/>
</dbReference>
<dbReference type="GO" id="GO:0031464">
    <property type="term" value="C:Cul4A-RING E3 ubiquitin ligase complex"/>
    <property type="evidence" value="ECO:0000250"/>
    <property type="project" value="UniProtKB"/>
</dbReference>
<dbReference type="GO" id="GO:0031465">
    <property type="term" value="C:Cul4B-RING E3 ubiquitin ligase complex"/>
    <property type="evidence" value="ECO:0000250"/>
    <property type="project" value="UniProtKB"/>
</dbReference>
<dbReference type="GO" id="GO:0005737">
    <property type="term" value="C:cytoplasm"/>
    <property type="evidence" value="ECO:0007669"/>
    <property type="project" value="UniProtKB-KW"/>
</dbReference>
<dbReference type="GO" id="GO:0005634">
    <property type="term" value="C:nucleus"/>
    <property type="evidence" value="ECO:0000250"/>
    <property type="project" value="UniProtKB"/>
</dbReference>
<dbReference type="GO" id="GO:0030674">
    <property type="term" value="F:protein-macromolecule adaptor activity"/>
    <property type="evidence" value="ECO:0000318"/>
    <property type="project" value="GO_Central"/>
</dbReference>
<dbReference type="GO" id="GO:0006974">
    <property type="term" value="P:DNA damage response"/>
    <property type="evidence" value="ECO:0000250"/>
    <property type="project" value="UniProtKB"/>
</dbReference>
<dbReference type="GO" id="GO:0006260">
    <property type="term" value="P:DNA replication"/>
    <property type="evidence" value="ECO:0007669"/>
    <property type="project" value="UniProtKB-KW"/>
</dbReference>
<dbReference type="GO" id="GO:0007095">
    <property type="term" value="P:mitotic G2 DNA damage checkpoint signaling"/>
    <property type="evidence" value="ECO:0000250"/>
    <property type="project" value="UniProtKB"/>
</dbReference>
<dbReference type="GO" id="GO:0043161">
    <property type="term" value="P:proteasome-mediated ubiquitin-dependent protein catabolic process"/>
    <property type="evidence" value="ECO:0000318"/>
    <property type="project" value="GO_Central"/>
</dbReference>
<dbReference type="GO" id="GO:0006513">
    <property type="term" value="P:protein monoubiquitination"/>
    <property type="evidence" value="ECO:0000250"/>
    <property type="project" value="UniProtKB"/>
</dbReference>
<dbReference type="GO" id="GO:0000209">
    <property type="term" value="P:protein polyubiquitination"/>
    <property type="evidence" value="ECO:0000250"/>
    <property type="project" value="UniProtKB"/>
</dbReference>
<dbReference type="GO" id="GO:0051726">
    <property type="term" value="P:regulation of cell cycle"/>
    <property type="evidence" value="ECO:0000250"/>
    <property type="project" value="UniProtKB"/>
</dbReference>
<dbReference type="GO" id="GO:0009411">
    <property type="term" value="P:response to UV"/>
    <property type="evidence" value="ECO:0000250"/>
    <property type="project" value="UniProtKB"/>
</dbReference>
<dbReference type="GO" id="GO:0048511">
    <property type="term" value="P:rhythmic process"/>
    <property type="evidence" value="ECO:0007669"/>
    <property type="project" value="UniProtKB-KW"/>
</dbReference>
<dbReference type="GO" id="GO:0019985">
    <property type="term" value="P:translesion synthesis"/>
    <property type="evidence" value="ECO:0000250"/>
    <property type="project" value="UniProtKB"/>
</dbReference>
<dbReference type="GO" id="GO:0006511">
    <property type="term" value="P:ubiquitin-dependent protein catabolic process"/>
    <property type="evidence" value="ECO:0000250"/>
    <property type="project" value="UniProtKB"/>
</dbReference>
<dbReference type="CDD" id="cd00200">
    <property type="entry name" value="WD40"/>
    <property type="match status" value="1"/>
</dbReference>
<dbReference type="FunFam" id="2.130.10.10:FF:000447">
    <property type="entry name" value="Denticleless protein homolog B"/>
    <property type="match status" value="1"/>
</dbReference>
<dbReference type="FunFam" id="2.130.10.10:FF:000171">
    <property type="entry name" value="denticleless protein homolog isoform X1"/>
    <property type="match status" value="1"/>
</dbReference>
<dbReference type="Gene3D" id="2.130.10.10">
    <property type="entry name" value="YVTN repeat-like/Quinoprotein amine dehydrogenase"/>
    <property type="match status" value="2"/>
</dbReference>
<dbReference type="InterPro" id="IPR020472">
    <property type="entry name" value="G-protein_beta_WD-40_rep"/>
</dbReference>
<dbReference type="InterPro" id="IPR051865">
    <property type="entry name" value="WD-repeat_CDT2_adapter"/>
</dbReference>
<dbReference type="InterPro" id="IPR015943">
    <property type="entry name" value="WD40/YVTN_repeat-like_dom_sf"/>
</dbReference>
<dbReference type="InterPro" id="IPR019775">
    <property type="entry name" value="WD40_repeat_CS"/>
</dbReference>
<dbReference type="InterPro" id="IPR036322">
    <property type="entry name" value="WD40_repeat_dom_sf"/>
</dbReference>
<dbReference type="InterPro" id="IPR001680">
    <property type="entry name" value="WD40_rpt"/>
</dbReference>
<dbReference type="PANTHER" id="PTHR22852:SF0">
    <property type="entry name" value="DENTICLELESS PROTEIN HOMOLOG"/>
    <property type="match status" value="1"/>
</dbReference>
<dbReference type="PANTHER" id="PTHR22852">
    <property type="entry name" value="LETHAL 2 DENTICLELESS PROTEIN RETINOIC ACID-REGULATED NUCLEAR MATRIX-ASSOCIATED PROTEIN"/>
    <property type="match status" value="1"/>
</dbReference>
<dbReference type="Pfam" id="PF00400">
    <property type="entry name" value="WD40"/>
    <property type="match status" value="4"/>
</dbReference>
<dbReference type="PRINTS" id="PR00320">
    <property type="entry name" value="GPROTEINBRPT"/>
</dbReference>
<dbReference type="SMART" id="SM00320">
    <property type="entry name" value="WD40"/>
    <property type="match status" value="6"/>
</dbReference>
<dbReference type="SUPFAM" id="SSF50978">
    <property type="entry name" value="WD40 repeat-like"/>
    <property type="match status" value="1"/>
</dbReference>
<dbReference type="PROSITE" id="PS00678">
    <property type="entry name" value="WD_REPEATS_1"/>
    <property type="match status" value="2"/>
</dbReference>
<dbReference type="PROSITE" id="PS50082">
    <property type="entry name" value="WD_REPEATS_2"/>
    <property type="match status" value="5"/>
</dbReference>
<dbReference type="PROSITE" id="PS50294">
    <property type="entry name" value="WD_REPEATS_REGION"/>
    <property type="match status" value="1"/>
</dbReference>
<keyword id="KW-0090">Biological rhythms</keyword>
<keyword id="KW-0158">Chromosome</keyword>
<keyword id="KW-0963">Cytoplasm</keyword>
<keyword id="KW-0206">Cytoskeleton</keyword>
<keyword id="KW-0227">DNA damage</keyword>
<keyword id="KW-0235">DNA replication</keyword>
<keyword id="KW-0539">Nucleus</keyword>
<keyword id="KW-1185">Reference proteome</keyword>
<keyword id="KW-0677">Repeat</keyword>
<keyword id="KW-0833">Ubl conjugation pathway</keyword>
<keyword id="KW-0853">WD repeat</keyword>
<evidence type="ECO:0000250" key="1"/>
<evidence type="ECO:0000250" key="2">
    <source>
        <dbReference type="UniProtKB" id="Q6P1W0"/>
    </source>
</evidence>
<evidence type="ECO:0000250" key="3">
    <source>
        <dbReference type="UniProtKB" id="Q9NZJ0"/>
    </source>
</evidence>
<evidence type="ECO:0000255" key="4"/>
<evidence type="ECO:0000256" key="5">
    <source>
        <dbReference type="SAM" id="MobiDB-lite"/>
    </source>
</evidence>
<evidence type="ECO:0000269" key="6">
    <source>
    </source>
</evidence>
<evidence type="ECO:0000305" key="7"/>
<accession>Q4V837</accession>
<gene>
    <name type="primary">dtl-a</name>
    <name type="synonym">cdt2-a</name>
</gene>
<feature type="chain" id="PRO_0000396625" description="Denticleless protein homolog A">
    <location>
        <begin position="1"/>
        <end position="710"/>
    </location>
</feature>
<feature type="repeat" description="WD 1">
    <location>
        <begin position="47"/>
        <end position="89"/>
    </location>
</feature>
<feature type="repeat" description="WD 2">
    <location>
        <begin position="96"/>
        <end position="135"/>
    </location>
</feature>
<feature type="repeat" description="WD 3">
    <location>
        <begin position="138"/>
        <end position="178"/>
    </location>
</feature>
<feature type="repeat" description="WD 4">
    <location>
        <begin position="215"/>
        <end position="254"/>
    </location>
</feature>
<feature type="repeat" description="WD 5">
    <location>
        <begin position="270"/>
        <end position="309"/>
    </location>
</feature>
<feature type="repeat" description="WD 6">
    <location>
        <begin position="314"/>
        <end position="355"/>
    </location>
</feature>
<feature type="repeat" description="WD 7">
    <location>
        <begin position="359"/>
        <end position="398"/>
    </location>
</feature>
<feature type="region of interest" description="Disordered" evidence="5">
    <location>
        <begin position="428"/>
        <end position="534"/>
    </location>
</feature>
<feature type="region of interest" description="Disordered" evidence="5">
    <location>
        <begin position="652"/>
        <end position="698"/>
    </location>
</feature>
<feature type="short sequence motif" description="DDB1-binding motif" evidence="1">
    <location>
        <begin position="168"/>
        <end position="171"/>
    </location>
</feature>
<feature type="short sequence motif" description="Nuclear localization signal" evidence="4">
    <location>
        <begin position="197"/>
        <end position="204"/>
    </location>
</feature>
<feature type="short sequence motif" description="DDB1-binding motif" evidence="1">
    <location>
        <begin position="244"/>
        <end position="247"/>
    </location>
</feature>
<feature type="compositionally biased region" description="Low complexity" evidence="5">
    <location>
        <begin position="430"/>
        <end position="450"/>
    </location>
</feature>
<feature type="compositionally biased region" description="Polar residues" evidence="5">
    <location>
        <begin position="504"/>
        <end position="516"/>
    </location>
</feature>
<feature type="compositionally biased region" description="Polar residues" evidence="5">
    <location>
        <begin position="659"/>
        <end position="690"/>
    </location>
</feature>
<organism>
    <name type="scientific">Xenopus laevis</name>
    <name type="common">African clawed frog</name>
    <dbReference type="NCBI Taxonomy" id="8355"/>
    <lineage>
        <taxon>Eukaryota</taxon>
        <taxon>Metazoa</taxon>
        <taxon>Chordata</taxon>
        <taxon>Craniata</taxon>
        <taxon>Vertebrata</taxon>
        <taxon>Euteleostomi</taxon>
        <taxon>Amphibia</taxon>
        <taxon>Batrachia</taxon>
        <taxon>Anura</taxon>
        <taxon>Pipoidea</taxon>
        <taxon>Pipidae</taxon>
        <taxon>Xenopodinae</taxon>
        <taxon>Xenopus</taxon>
        <taxon>Xenopus</taxon>
    </lineage>
</organism>
<reference key="1">
    <citation type="submission" date="2005-06" db="EMBL/GenBank/DDBJ databases">
        <authorList>
            <consortium name="NIH - Xenopus Gene Collection (XGC) project"/>
        </authorList>
    </citation>
    <scope>NUCLEOTIDE SEQUENCE [LARGE SCALE MRNA]</scope>
    <source>
        <tissue>Embryo</tissue>
    </source>
</reference>
<reference key="2">
    <citation type="journal article" date="2009" name="Mol. Cell">
        <title>Docking of a specialized PIP Box onto chromatin-bound PCNA creates a degron for the ubiquitin ligase CRL4Cdt2.</title>
        <authorList>
            <person name="Havens C.G."/>
            <person name="Walter J.C."/>
        </authorList>
    </citation>
    <scope>FUNCTION</scope>
</reference>
<protein>
    <recommendedName>
        <fullName>Denticleless protein homolog A</fullName>
    </recommendedName>
</protein>
<proteinExistence type="evidence at transcript level"/>